<keyword id="KW-1003">Cell membrane</keyword>
<keyword id="KW-0325">Glycoprotein</keyword>
<keyword id="KW-0472">Membrane</keyword>
<keyword id="KW-0812">Transmembrane</keyword>
<keyword id="KW-1133">Transmembrane helix</keyword>
<name>CSPL1_GINBI</name>
<sequence>MNASHPAVHPVGVPPAVAGQLPPRMRMKEIQGMPGTIGGLLLRLGQFCFALVAFSIMVSIENFSTVTAFCYLVAATVLQCLWSLALAIIDGYALLVKRSLRNSLLVSLLVVGDGVTATLTFAAACASAGITVLIGNDLRQCKENHCARYETATALAFLSWFMVSLSFILTFWLLATR</sequence>
<reference key="1">
    <citation type="journal article" date="2005" name="Plant Physiol.">
        <title>Comparative plant genomics resources at PlantGDB.</title>
        <authorList>
            <person name="Dong Q."/>
            <person name="Lawrence C.J."/>
            <person name="Schlueter S.D."/>
            <person name="Wilkerson M.D."/>
            <person name="Kurtz S."/>
            <person name="Lushbough C."/>
            <person name="Brendel V."/>
        </authorList>
    </citation>
    <scope>NUCLEOTIDE SEQUENCE [LARGE SCALE MRNA]</scope>
</reference>
<reference key="2">
    <citation type="journal article" date="2010" name="Tree Genet. Genomes">
        <title>Analysis of expressed sequence tags from Ginkgo mature foliage in China.</title>
        <authorList>
            <person name="Wang Y.Q."/>
            <person name="Shen J.K."/>
            <person name="Berglund T."/>
            <person name="Ohlsson A.B."/>
            <person name="Tang X.F."/>
            <person name="Zhou Z.K."/>
            <person name="Wu R.Y."/>
            <person name="Zhou X.H."/>
            <person name="Chen J.N."/>
        </authorList>
    </citation>
    <scope>NUCLEOTIDE SEQUENCE [LARGE SCALE MRNA] OF 1-137</scope>
    <source>
        <strain>cv. Hunan Meihe</strain>
        <tissue>Leaf</tissue>
    </source>
</reference>
<reference key="3">
    <citation type="journal article" date="2014" name="Plant Physiol.">
        <title>Functional and evolutionary analysis of the CASPARIAN STRIP MEMBRANE DOMAIN PROTEIN family.</title>
        <authorList>
            <person name="Roppolo D."/>
            <person name="Boeckmann B."/>
            <person name="Pfister A."/>
            <person name="Boutet E."/>
            <person name="Rubio M.C."/>
            <person name="Denervaud-Tendon V."/>
            <person name="Vermeer J.E."/>
            <person name="Gheyselinck J."/>
            <person name="Xenarios I."/>
            <person name="Geldner N."/>
        </authorList>
    </citation>
    <scope>GENE FAMILY</scope>
    <scope>NOMENCLATURE</scope>
</reference>
<dbReference type="EMBL" id="GE649070">
    <property type="status" value="NOT_ANNOTATED_CDS"/>
    <property type="molecule type" value="mRNA"/>
</dbReference>
<dbReference type="GO" id="GO:0005886">
    <property type="term" value="C:plasma membrane"/>
    <property type="evidence" value="ECO:0007669"/>
    <property type="project" value="UniProtKB-SubCell"/>
</dbReference>
<dbReference type="InterPro" id="IPR006702">
    <property type="entry name" value="CASP_dom"/>
</dbReference>
<dbReference type="InterPro" id="IPR045009">
    <property type="entry name" value="CASPL-5"/>
</dbReference>
<dbReference type="PANTHER" id="PTHR32021:SF1">
    <property type="entry name" value="CASP-LIKE PROTEIN 5A1"/>
    <property type="match status" value="1"/>
</dbReference>
<dbReference type="PANTHER" id="PTHR32021">
    <property type="entry name" value="CASP-LIKE PROTEIN 5B3"/>
    <property type="match status" value="1"/>
</dbReference>
<dbReference type="Pfam" id="PF04535">
    <property type="entry name" value="CASP_dom"/>
    <property type="match status" value="1"/>
</dbReference>
<comment type="subunit">
    <text evidence="1">Homodimer and heterodimers.</text>
</comment>
<comment type="subcellular location">
    <subcellularLocation>
        <location evidence="1">Cell membrane</location>
        <topology evidence="1">Multi-pass membrane protein</topology>
    </subcellularLocation>
</comment>
<comment type="similarity">
    <text evidence="3">Belongs to the Casparian strip membrane proteins (CASP) family.</text>
</comment>
<accession>P0DI69</accession>
<organism>
    <name type="scientific">Ginkgo biloba</name>
    <name type="common">Ginkgo</name>
    <name type="synonym">Maidenhair tree</name>
    <dbReference type="NCBI Taxonomy" id="3311"/>
    <lineage>
        <taxon>Eukaryota</taxon>
        <taxon>Viridiplantae</taxon>
        <taxon>Streptophyta</taxon>
        <taxon>Embryophyta</taxon>
        <taxon>Tracheophyta</taxon>
        <taxon>Spermatophyta</taxon>
        <taxon>Ginkgoidae</taxon>
        <taxon>Ginkgoales</taxon>
        <taxon>Ginkgoaceae</taxon>
        <taxon>Ginkgo</taxon>
    </lineage>
</organism>
<gene>
    <name type="ORF">gba_locus_19756</name>
</gene>
<proteinExistence type="evidence at transcript level"/>
<protein>
    <recommendedName>
        <fullName>CASP-like protein 5A2</fullName>
        <shortName>GbCASPL5A2</shortName>
    </recommendedName>
</protein>
<feature type="chain" id="PRO_0000418707" description="CASP-like protein 5A2">
    <location>
        <begin position="1"/>
        <end position="177"/>
    </location>
</feature>
<feature type="topological domain" description="Cytoplasmic" evidence="2">
    <location>
        <begin position="1"/>
        <end position="36"/>
    </location>
</feature>
<feature type="transmembrane region" description="Helical" evidence="2">
    <location>
        <begin position="37"/>
        <end position="57"/>
    </location>
</feature>
<feature type="topological domain" description="Extracellular" evidence="2">
    <location>
        <begin position="58"/>
        <end position="68"/>
    </location>
</feature>
<feature type="transmembrane region" description="Helical" evidence="2">
    <location>
        <begin position="69"/>
        <end position="89"/>
    </location>
</feature>
<feature type="topological domain" description="Cytoplasmic" evidence="2">
    <location>
        <begin position="90"/>
        <end position="103"/>
    </location>
</feature>
<feature type="transmembrane region" description="Helical" evidence="2">
    <location>
        <begin position="104"/>
        <end position="124"/>
    </location>
</feature>
<feature type="topological domain" description="Extracellular" evidence="2">
    <location>
        <begin position="125"/>
        <end position="153"/>
    </location>
</feature>
<feature type="transmembrane region" description="Helical" evidence="2">
    <location>
        <begin position="154"/>
        <end position="174"/>
    </location>
</feature>
<feature type="topological domain" description="Cytoplasmic" evidence="2">
    <location>
        <begin position="175"/>
        <end position="177"/>
    </location>
</feature>
<feature type="glycosylation site" description="N-linked (GlcNAc...) asparagine" evidence="2">
    <location>
        <position position="62"/>
    </location>
</feature>
<feature type="sequence conflict" description="In Ref. 2; GE649070." evidence="3" ref="2">
    <original>L</original>
    <variation>F</variation>
    <location>
        <position position="109"/>
    </location>
</feature>
<evidence type="ECO:0000250" key="1"/>
<evidence type="ECO:0000255" key="2"/>
<evidence type="ECO:0000305" key="3"/>